<comment type="function">
    <text evidence="8 10 11 12">Serine/threonine-protein kinase involved in energy homeostasis and protein translation. Phosphorylates EEF1A1, GYS1, PDX1 and RPS6. Probably plays a role under changing environmental conditions (oxygen, glucose, nutrition), rather than under standard conditions. Acts as a sensor involved in energy homeostasis: regulates glycogen synthase synthesis by mediating phosphorylation of GYS1, leading to GYS1 inactivation. May be involved in glucose-stimulated insulin production in pancreas and regulation of glucagon secretion by glucose in alpha cells; however such data require additional evidences. May play a role in regulation of protein translation by phosphorylating EEF1A1, leading to increase translation efficiency. May also participate in respiratory regulation.</text>
</comment>
<comment type="catalytic activity">
    <reaction>
        <text>L-seryl-[protein] + ATP = O-phospho-L-seryl-[protein] + ADP + H(+)</text>
        <dbReference type="Rhea" id="RHEA:17989"/>
        <dbReference type="Rhea" id="RHEA-COMP:9863"/>
        <dbReference type="Rhea" id="RHEA-COMP:11604"/>
        <dbReference type="ChEBI" id="CHEBI:15378"/>
        <dbReference type="ChEBI" id="CHEBI:29999"/>
        <dbReference type="ChEBI" id="CHEBI:30616"/>
        <dbReference type="ChEBI" id="CHEBI:83421"/>
        <dbReference type="ChEBI" id="CHEBI:456216"/>
        <dbReference type="EC" id="2.7.11.1"/>
    </reaction>
</comment>
<comment type="catalytic activity">
    <reaction>
        <text>L-threonyl-[protein] + ATP = O-phospho-L-threonyl-[protein] + ADP + H(+)</text>
        <dbReference type="Rhea" id="RHEA:46608"/>
        <dbReference type="Rhea" id="RHEA-COMP:11060"/>
        <dbReference type="Rhea" id="RHEA-COMP:11605"/>
        <dbReference type="ChEBI" id="CHEBI:15378"/>
        <dbReference type="ChEBI" id="CHEBI:30013"/>
        <dbReference type="ChEBI" id="CHEBI:30616"/>
        <dbReference type="ChEBI" id="CHEBI:61977"/>
        <dbReference type="ChEBI" id="CHEBI:456216"/>
        <dbReference type="EC" id="2.7.11.1"/>
    </reaction>
</comment>
<comment type="activity regulation">
    <text evidence="1">Protein kinase activity is inhibited by the first PAS domain: binding of an unidentified ligand desinhibits the protein kinase activity. May be activated by autophosphorylation on Thr-1221 and Thr-1225. Autophosphorylation is enhanced upon phosphatidylinositol monophosphate (phosphatidylinositol 4-phosphate) binding and inhibited upon phosphatidylinositol bi- and tri-phosphate binding. In contrast, phosphorylation of target proteins is inhibited upon all phosphatidylinositol-binding (phosphatidylinositol mono- bi- and tri-phosphate) (By similarity).</text>
</comment>
<comment type="subcellular location">
    <subcellularLocation>
        <location evidence="1">Cytoplasm</location>
    </subcellularLocation>
    <subcellularLocation>
        <location evidence="1">Nucleus</location>
    </subcellularLocation>
    <text evidence="1">Localizes in the nucleus of testis germ cells and in the midpiece of sperm tails.</text>
</comment>
<comment type="tissue specificity">
    <text evidence="7">Ubiquitously expressed. Strongly up-regulated in postmeiotic germ cells during spermatogenesis.</text>
</comment>
<comment type="domain">
    <text evidence="1">The protein kinase domain mediates binding to phosphatidylinositol.</text>
</comment>
<comment type="PTM">
    <text evidence="1">Autophosphorylated on Thr-1221 and Thr-1225. Autophosphorylation is activated by phospholipids (By similarity).</text>
</comment>
<comment type="disruption phenotype">
    <text evidence="7 9 10 11">No visible phenotype under normal conditions: mice show normal development, growth and reproduction. Fertility and sperm production and motility are not affected in males. Under high-fat diet, mice seem to be protected from deleterious effects, including obesity, liver triglyceride accumulation and insulin resistance (PubMed:17878307). In contrast, the lean phenotype appears only after feeding a high-fat diet: under normal chow diet, body weight, fat composition, oxygen consumption are not distinguishable from wild-type mice (PubMed:17192472). The only difference between these 2 experiments is that mice were backcrossed into C57BL/6 5 times in the first study (PubMed:17878307), while the 10th backcross was used in the second study (PubMed:17192472). Female but not male mice show an increased ventilatory response to acute hypoxia and fail to reach ventilatory acclimatization to chronic hypoxia.</text>
</comment>
<comment type="similarity">
    <text evidence="13">Belongs to the protein kinase superfamily. CAMK Ser/Thr protein kinase family.</text>
</comment>
<name>PASK_MOUSE</name>
<keyword id="KW-0007">Acetylation</keyword>
<keyword id="KW-0067">ATP-binding</keyword>
<keyword id="KW-0963">Cytoplasm</keyword>
<keyword id="KW-0418">Kinase</keyword>
<keyword id="KW-0446">Lipid-binding</keyword>
<keyword id="KW-0547">Nucleotide-binding</keyword>
<keyword id="KW-0539">Nucleus</keyword>
<keyword id="KW-0597">Phosphoprotein</keyword>
<keyword id="KW-1185">Reference proteome</keyword>
<keyword id="KW-0677">Repeat</keyword>
<keyword id="KW-0723">Serine/threonine-protein kinase</keyword>
<keyword id="KW-0808">Transferase</keyword>
<evidence type="ECO:0000250" key="1"/>
<evidence type="ECO:0000250" key="2">
    <source>
        <dbReference type="UniProtKB" id="Q96RG2"/>
    </source>
</evidence>
<evidence type="ECO:0000255" key="3">
    <source>
        <dbReference type="PROSITE-ProRule" id="PRU00140"/>
    </source>
</evidence>
<evidence type="ECO:0000255" key="4">
    <source>
        <dbReference type="PROSITE-ProRule" id="PRU00159"/>
    </source>
</evidence>
<evidence type="ECO:0000255" key="5">
    <source>
        <dbReference type="PROSITE-ProRule" id="PRU10027"/>
    </source>
</evidence>
<evidence type="ECO:0000256" key="6">
    <source>
        <dbReference type="SAM" id="MobiDB-lite"/>
    </source>
</evidence>
<evidence type="ECO:0000269" key="7">
    <source>
    </source>
</evidence>
<evidence type="ECO:0000269" key="8">
    <source>
    </source>
</evidence>
<evidence type="ECO:0000269" key="9">
    <source>
    </source>
</evidence>
<evidence type="ECO:0000269" key="10">
    <source>
    </source>
</evidence>
<evidence type="ECO:0000269" key="11">
    <source>
    </source>
</evidence>
<evidence type="ECO:0000269" key="12">
    <source>
    </source>
</evidence>
<evidence type="ECO:0000305" key="13"/>
<evidence type="ECO:0007744" key="14">
    <source>
    </source>
</evidence>
<reference key="1">
    <citation type="journal article" date="2001" name="Biochem. Biophys. Res. Commun.">
        <title>Mammalian PASKIN, a PAS-serine/threonine kinase related to bacterial oxygen sensors.</title>
        <authorList>
            <person name="Hofer T."/>
            <person name="Spielmann P."/>
            <person name="Stengel P."/>
            <person name="Stier B."/>
            <person name="Katschinski D.M."/>
            <person name="Desbaillets I."/>
            <person name="Gassmann M."/>
            <person name="Wenger R.H."/>
        </authorList>
    </citation>
    <scope>NUCLEOTIDE SEQUENCE [GENOMIC DNA]</scope>
    <source>
        <strain>129/Sv</strain>
    </source>
</reference>
<reference key="2">
    <citation type="journal article" date="2005" name="Science">
        <title>The transcriptional landscape of the mammalian genome.</title>
        <authorList>
            <person name="Carninci P."/>
            <person name="Kasukawa T."/>
            <person name="Katayama S."/>
            <person name="Gough J."/>
            <person name="Frith M.C."/>
            <person name="Maeda N."/>
            <person name="Oyama R."/>
            <person name="Ravasi T."/>
            <person name="Lenhard B."/>
            <person name="Wells C."/>
            <person name="Kodzius R."/>
            <person name="Shimokawa K."/>
            <person name="Bajic V.B."/>
            <person name="Brenner S.E."/>
            <person name="Batalov S."/>
            <person name="Forrest A.R."/>
            <person name="Zavolan M."/>
            <person name="Davis M.J."/>
            <person name="Wilming L.G."/>
            <person name="Aidinis V."/>
            <person name="Allen J.E."/>
            <person name="Ambesi-Impiombato A."/>
            <person name="Apweiler R."/>
            <person name="Aturaliya R.N."/>
            <person name="Bailey T.L."/>
            <person name="Bansal M."/>
            <person name="Baxter L."/>
            <person name="Beisel K.W."/>
            <person name="Bersano T."/>
            <person name="Bono H."/>
            <person name="Chalk A.M."/>
            <person name="Chiu K.P."/>
            <person name="Choudhary V."/>
            <person name="Christoffels A."/>
            <person name="Clutterbuck D.R."/>
            <person name="Crowe M.L."/>
            <person name="Dalla E."/>
            <person name="Dalrymple B.P."/>
            <person name="de Bono B."/>
            <person name="Della Gatta G."/>
            <person name="di Bernardo D."/>
            <person name="Down T."/>
            <person name="Engstrom P."/>
            <person name="Fagiolini M."/>
            <person name="Faulkner G."/>
            <person name="Fletcher C.F."/>
            <person name="Fukushima T."/>
            <person name="Furuno M."/>
            <person name="Futaki S."/>
            <person name="Gariboldi M."/>
            <person name="Georgii-Hemming P."/>
            <person name="Gingeras T.R."/>
            <person name="Gojobori T."/>
            <person name="Green R.E."/>
            <person name="Gustincich S."/>
            <person name="Harbers M."/>
            <person name="Hayashi Y."/>
            <person name="Hensch T.K."/>
            <person name="Hirokawa N."/>
            <person name="Hill D."/>
            <person name="Huminiecki L."/>
            <person name="Iacono M."/>
            <person name="Ikeo K."/>
            <person name="Iwama A."/>
            <person name="Ishikawa T."/>
            <person name="Jakt M."/>
            <person name="Kanapin A."/>
            <person name="Katoh M."/>
            <person name="Kawasawa Y."/>
            <person name="Kelso J."/>
            <person name="Kitamura H."/>
            <person name="Kitano H."/>
            <person name="Kollias G."/>
            <person name="Krishnan S.P."/>
            <person name="Kruger A."/>
            <person name="Kummerfeld S.K."/>
            <person name="Kurochkin I.V."/>
            <person name="Lareau L.F."/>
            <person name="Lazarevic D."/>
            <person name="Lipovich L."/>
            <person name="Liu J."/>
            <person name="Liuni S."/>
            <person name="McWilliam S."/>
            <person name="Madan Babu M."/>
            <person name="Madera M."/>
            <person name="Marchionni L."/>
            <person name="Matsuda H."/>
            <person name="Matsuzawa S."/>
            <person name="Miki H."/>
            <person name="Mignone F."/>
            <person name="Miyake S."/>
            <person name="Morris K."/>
            <person name="Mottagui-Tabar S."/>
            <person name="Mulder N."/>
            <person name="Nakano N."/>
            <person name="Nakauchi H."/>
            <person name="Ng P."/>
            <person name="Nilsson R."/>
            <person name="Nishiguchi S."/>
            <person name="Nishikawa S."/>
            <person name="Nori F."/>
            <person name="Ohara O."/>
            <person name="Okazaki Y."/>
            <person name="Orlando V."/>
            <person name="Pang K.C."/>
            <person name="Pavan W.J."/>
            <person name="Pavesi G."/>
            <person name="Pesole G."/>
            <person name="Petrovsky N."/>
            <person name="Piazza S."/>
            <person name="Reed J."/>
            <person name="Reid J.F."/>
            <person name="Ring B.Z."/>
            <person name="Ringwald M."/>
            <person name="Rost B."/>
            <person name="Ruan Y."/>
            <person name="Salzberg S.L."/>
            <person name="Sandelin A."/>
            <person name="Schneider C."/>
            <person name="Schoenbach C."/>
            <person name="Sekiguchi K."/>
            <person name="Semple C.A."/>
            <person name="Seno S."/>
            <person name="Sessa L."/>
            <person name="Sheng Y."/>
            <person name="Shibata Y."/>
            <person name="Shimada H."/>
            <person name="Shimada K."/>
            <person name="Silva D."/>
            <person name="Sinclair B."/>
            <person name="Sperling S."/>
            <person name="Stupka E."/>
            <person name="Sugiura K."/>
            <person name="Sultana R."/>
            <person name="Takenaka Y."/>
            <person name="Taki K."/>
            <person name="Tammoja K."/>
            <person name="Tan S.L."/>
            <person name="Tang S."/>
            <person name="Taylor M.S."/>
            <person name="Tegner J."/>
            <person name="Teichmann S.A."/>
            <person name="Ueda H.R."/>
            <person name="van Nimwegen E."/>
            <person name="Verardo R."/>
            <person name="Wei C.L."/>
            <person name="Yagi K."/>
            <person name="Yamanishi H."/>
            <person name="Zabarovsky E."/>
            <person name="Zhu S."/>
            <person name="Zimmer A."/>
            <person name="Hide W."/>
            <person name="Bult C."/>
            <person name="Grimmond S.M."/>
            <person name="Teasdale R.D."/>
            <person name="Liu E.T."/>
            <person name="Brusic V."/>
            <person name="Quackenbush J."/>
            <person name="Wahlestedt C."/>
            <person name="Mattick J.S."/>
            <person name="Hume D.A."/>
            <person name="Kai C."/>
            <person name="Sasaki D."/>
            <person name="Tomaru Y."/>
            <person name="Fukuda S."/>
            <person name="Kanamori-Katayama M."/>
            <person name="Suzuki M."/>
            <person name="Aoki J."/>
            <person name="Arakawa T."/>
            <person name="Iida J."/>
            <person name="Imamura K."/>
            <person name="Itoh M."/>
            <person name="Kato T."/>
            <person name="Kawaji H."/>
            <person name="Kawagashira N."/>
            <person name="Kawashima T."/>
            <person name="Kojima M."/>
            <person name="Kondo S."/>
            <person name="Konno H."/>
            <person name="Nakano K."/>
            <person name="Ninomiya N."/>
            <person name="Nishio T."/>
            <person name="Okada M."/>
            <person name="Plessy C."/>
            <person name="Shibata K."/>
            <person name="Shiraki T."/>
            <person name="Suzuki S."/>
            <person name="Tagami M."/>
            <person name="Waki K."/>
            <person name="Watahiki A."/>
            <person name="Okamura-Oho Y."/>
            <person name="Suzuki H."/>
            <person name="Kawai J."/>
            <person name="Hayashizaki Y."/>
        </authorList>
    </citation>
    <scope>NUCLEOTIDE SEQUENCE [LARGE SCALE MRNA]</scope>
    <source>
        <strain>C57BL/6J</strain>
        <tissue>Liver</tissue>
    </source>
</reference>
<reference key="3">
    <citation type="journal article" date="2003" name="DNA Res.">
        <title>Prediction of the coding sequences of mouse homologues of KIAA gene: III. The complete nucleotide sequences of 500 mouse KIAA-homologous cDNAs identified by screening of terminal sequences of cDNA clones randomly sampled from size-fractionated libraries.</title>
        <authorList>
            <person name="Okazaki N."/>
            <person name="Kikuno R."/>
            <person name="Ohara R."/>
            <person name="Inamoto S."/>
            <person name="Koseki H."/>
            <person name="Hiraoka S."/>
            <person name="Saga Y."/>
            <person name="Nagase T."/>
            <person name="Ohara O."/>
            <person name="Koga H."/>
        </authorList>
    </citation>
    <scope>NUCLEOTIDE SEQUENCE [LARGE SCALE MRNA]</scope>
    <source>
        <tissue>Embryonic tail</tissue>
    </source>
</reference>
<reference key="4">
    <citation type="journal article" date="2009" name="PLoS Biol.">
        <title>Lineage-specific biology revealed by a finished genome assembly of the mouse.</title>
        <authorList>
            <person name="Church D.M."/>
            <person name="Goodstadt L."/>
            <person name="Hillier L.W."/>
            <person name="Zody M.C."/>
            <person name="Goldstein S."/>
            <person name="She X."/>
            <person name="Bult C.J."/>
            <person name="Agarwala R."/>
            <person name="Cherry J.L."/>
            <person name="DiCuccio M."/>
            <person name="Hlavina W."/>
            <person name="Kapustin Y."/>
            <person name="Meric P."/>
            <person name="Maglott D."/>
            <person name="Birtle Z."/>
            <person name="Marques A.C."/>
            <person name="Graves T."/>
            <person name="Zhou S."/>
            <person name="Teague B."/>
            <person name="Potamousis K."/>
            <person name="Churas C."/>
            <person name="Place M."/>
            <person name="Herschleb J."/>
            <person name="Runnheim R."/>
            <person name="Forrest D."/>
            <person name="Amos-Landgraf J."/>
            <person name="Schwartz D.C."/>
            <person name="Cheng Z."/>
            <person name="Lindblad-Toh K."/>
            <person name="Eichler E.E."/>
            <person name="Ponting C.P."/>
        </authorList>
    </citation>
    <scope>NUCLEOTIDE SEQUENCE [LARGE SCALE GENOMIC DNA]</scope>
    <source>
        <strain>C57BL/6J</strain>
    </source>
</reference>
<reference key="5">
    <citation type="journal article" date="2003" name="Mol. Cell. Biol.">
        <title>Targeted disruption of the mouse PAS domain serine/threonine kinase PASKIN.</title>
        <authorList>
            <person name="Katschinski D.M."/>
            <person name="Marti H.H."/>
            <person name="Wagner K.F."/>
            <person name="Shibata J."/>
            <person name="Eckhardt K."/>
            <person name="Martin F."/>
            <person name="Depping R."/>
            <person name="Paasch U."/>
            <person name="Gassmann M."/>
            <person name="Ledermann B."/>
            <person name="Desbaillets I."/>
            <person name="Wenger R.H."/>
        </authorList>
    </citation>
    <scope>DISRUPTION PHENOTYPE</scope>
    <scope>TISSUE SPECIFICITY</scope>
</reference>
<reference key="6">
    <citation type="journal article" date="2004" name="Proc. Natl. Acad. Sci. U.S.A.">
        <title>Involvement of Per-Arnt-Sim (PAS) kinase in the stimulation of preproinsulin and pancreatic duodenum homeobox 1 gene expression by glucose.</title>
        <authorList>
            <person name="da Silva Xavier G."/>
            <person name="Rutter J."/>
            <person name="Rutter G.A."/>
        </authorList>
    </citation>
    <scope>FUNCTION</scope>
</reference>
<reference key="7">
    <citation type="journal article" date="2007" name="Diabetes">
        <title>Glucose-stimulated insulin production in mice deficient for the PAS kinase PASKIN.</title>
        <authorList>
            <person name="Borter E."/>
            <person name="Niessen M."/>
            <person name="Zuellig R."/>
            <person name="Spinas G.A."/>
            <person name="Spielmann P."/>
            <person name="Camenisch G."/>
            <person name="Wenger R.H."/>
        </authorList>
    </citation>
    <scope>DISRUPTION PHENOTYPE</scope>
</reference>
<reference key="8">
    <citation type="journal article" date="2007" name="Proc. Natl. Acad. Sci. U.S.A.">
        <title>PAS kinase is required for normal cellular energy balance.</title>
        <authorList>
            <person name="Hao H.X."/>
            <person name="Cardon C.M."/>
            <person name="Swiatek W."/>
            <person name="Cooksey R.C."/>
            <person name="Smith T.L."/>
            <person name="Wilde J."/>
            <person name="Boudina S."/>
            <person name="Abel E.D."/>
            <person name="McClain D.A."/>
            <person name="Rutter J."/>
        </authorList>
    </citation>
    <scope>FUNCTION</scope>
    <scope>DISRUPTION PHENOTYPE</scope>
</reference>
<reference key="9">
    <citation type="journal article" date="2008" name="Am. J. Physiol.">
        <title>Ventilatory responses to acute and chronic hypoxia are altered in female but not male Paskin-deficient mice.</title>
        <authorList>
            <person name="Soliz J."/>
            <person name="Soulage C."/>
            <person name="Borter E."/>
            <person name="van Patot M.T."/>
            <person name="Gassmann M."/>
        </authorList>
    </citation>
    <scope>FUNCTION</scope>
    <scope>DISRUPTION PHENOTYPE</scope>
</reference>
<reference key="10">
    <citation type="journal article" date="2010" name="Cell">
        <title>A tissue-specific atlas of mouse protein phosphorylation and expression.</title>
        <authorList>
            <person name="Huttlin E.L."/>
            <person name="Jedrychowski M.P."/>
            <person name="Elias J.E."/>
            <person name="Goswami T."/>
            <person name="Rad R."/>
            <person name="Beausoleil S.A."/>
            <person name="Villen J."/>
            <person name="Haas W."/>
            <person name="Sowa M.E."/>
            <person name="Gygi S.P."/>
        </authorList>
    </citation>
    <scope>PHOSPHORYLATION [LARGE SCALE ANALYSIS] AT SER-19 AND THR-31</scope>
    <scope>IDENTIFICATION BY MASS SPECTROMETRY [LARGE SCALE ANALYSIS]</scope>
    <source>
        <tissue>Spleen</tissue>
        <tissue>Testis</tissue>
    </source>
</reference>
<reference key="11">
    <citation type="journal article" date="2011" name="Diabetologia">
        <title>Per-arnt-sim (PAS) domain-containing protein kinase is downregulated in human islets in type 2 diabetes and regulates glucagon secretion.</title>
        <authorList>
            <person name="da Silva Xavier G."/>
            <person name="Farhan H."/>
            <person name="Kim H."/>
            <person name="Caxaria S."/>
            <person name="Johnson P."/>
            <person name="Hughes S."/>
            <person name="Bugliani M."/>
            <person name="Marselli L."/>
            <person name="Marchetti P."/>
            <person name="Birzele F."/>
            <person name="Sun G."/>
            <person name="Scharfmann R."/>
            <person name="Rutter J."/>
            <person name="Siniakowicz K."/>
            <person name="Weir G."/>
            <person name="Parker H."/>
            <person name="Reimann F."/>
            <person name="Gribble F.M."/>
            <person name="Rutter G.A."/>
        </authorList>
    </citation>
    <scope>FUNCTION</scope>
</reference>
<feature type="chain" id="PRO_0000086481" description="PAS domain-containing serine/threonine-protein kinase">
    <location>
        <begin position="1"/>
        <end position="1383"/>
    </location>
</feature>
<feature type="domain" description="PAS 1" evidence="3">
    <location>
        <begin position="117"/>
        <end position="188"/>
    </location>
</feature>
<feature type="domain" description="PAS 2" evidence="3">
    <location>
        <begin position="333"/>
        <end position="400"/>
    </location>
</feature>
<feature type="domain" description="Protein kinase" evidence="4">
    <location>
        <begin position="1059"/>
        <end position="1311"/>
    </location>
</feature>
<feature type="region of interest" description="Disordered" evidence="6">
    <location>
        <begin position="1344"/>
        <end position="1383"/>
    </location>
</feature>
<feature type="compositionally biased region" description="Basic and acidic residues" evidence="6">
    <location>
        <begin position="1364"/>
        <end position="1377"/>
    </location>
</feature>
<feature type="active site" description="Proton acceptor" evidence="4 5">
    <location>
        <position position="1188"/>
    </location>
</feature>
<feature type="binding site" evidence="4">
    <location>
        <begin position="1065"/>
        <end position="1073"/>
    </location>
    <ligand>
        <name>ATP</name>
        <dbReference type="ChEBI" id="CHEBI:30616"/>
    </ligand>
</feature>
<feature type="binding site" evidence="4">
    <location>
        <position position="1088"/>
    </location>
    <ligand>
        <name>ATP</name>
        <dbReference type="ChEBI" id="CHEBI:30616"/>
    </ligand>
</feature>
<feature type="binding site" evidence="4">
    <location>
        <begin position="1142"/>
        <end position="1149"/>
    </location>
    <ligand>
        <name>ATP</name>
        <dbReference type="ChEBI" id="CHEBI:30616"/>
    </ligand>
</feature>
<feature type="binding site" evidence="4">
    <location>
        <position position="1206"/>
    </location>
    <ligand>
        <name>ATP</name>
        <dbReference type="ChEBI" id="CHEBI:30616"/>
    </ligand>
</feature>
<feature type="modified residue" description="N-acetylmethionine" evidence="2">
    <location>
        <position position="1"/>
    </location>
</feature>
<feature type="modified residue" description="Phosphoserine" evidence="14">
    <location>
        <position position="19"/>
    </location>
</feature>
<feature type="modified residue" description="Phosphothreonine" evidence="14">
    <location>
        <position position="31"/>
    </location>
</feature>
<feature type="modified residue" description="Phosphoserine" evidence="2">
    <location>
        <position position="1000"/>
    </location>
</feature>
<feature type="modified residue" description="Phosphothreonine; by autocatalysis" evidence="2">
    <location>
        <position position="1221"/>
    </location>
</feature>
<feature type="modified residue" description="Phosphothreonine; by autocatalysis" evidence="2">
    <location>
        <position position="1225"/>
    </location>
</feature>
<feature type="sequence conflict" description="In Ref. 2; BAC25951." evidence="13" ref="2">
    <original>S</original>
    <variation>L</variation>
    <location>
        <position position="587"/>
    </location>
</feature>
<feature type="sequence conflict" description="In Ref. 1; CAC45054 and 3; BAC97873." evidence="13" ref="1 3">
    <original>A</original>
    <variation>V</variation>
    <location>
        <position position="832"/>
    </location>
</feature>
<feature type="sequence conflict" description="In Ref. 2; BAC25951." evidence="13" ref="2">
    <original>H</original>
    <variation>R</variation>
    <location>
        <position position="1186"/>
    </location>
</feature>
<feature type="sequence conflict" description="In Ref. 2; BAC25951." evidence="13" ref="2">
    <original>Q</original>
    <variation>H</variation>
    <location>
        <position position="1293"/>
    </location>
</feature>
<feature type="sequence conflict" description="In Ref. 1; CAC45054." evidence="13" ref="1">
    <original>P</original>
    <variation>L</variation>
    <location>
        <position position="1296"/>
    </location>
</feature>
<feature type="sequence conflict" description="In Ref. 2; BAC25951." evidence="13" ref="2">
    <original>Q</original>
    <variation>H</variation>
    <location>
        <position position="1330"/>
    </location>
</feature>
<proteinExistence type="evidence at protein level"/>
<organism>
    <name type="scientific">Mus musculus</name>
    <name type="common">Mouse</name>
    <dbReference type="NCBI Taxonomy" id="10090"/>
    <lineage>
        <taxon>Eukaryota</taxon>
        <taxon>Metazoa</taxon>
        <taxon>Chordata</taxon>
        <taxon>Craniata</taxon>
        <taxon>Vertebrata</taxon>
        <taxon>Euteleostomi</taxon>
        <taxon>Mammalia</taxon>
        <taxon>Eutheria</taxon>
        <taxon>Euarchontoglires</taxon>
        <taxon>Glires</taxon>
        <taxon>Rodentia</taxon>
        <taxon>Myomorpha</taxon>
        <taxon>Muroidea</taxon>
        <taxon>Muridae</taxon>
        <taxon>Murinae</taxon>
        <taxon>Mus</taxon>
        <taxon>Mus</taxon>
    </lineage>
</organism>
<sequence>MEDRGPPVFAEDWKCLSESPPVQEGPAAQATFEPSKPLSIAHKHLSRKNGLSRLCQSRMALSEDRWSSYCLSSLAAQNICTSKLHCAAAPEYADPTAGPLGSTSCCSLLRGLASGCSGSLLSTPVCNPNKAVFTVDAKTTEILVANDKACSLLGYSSHDLIGQKLAQFFLKSDSEVVEALSEEHVEADGHAAVVFGTVVDIVSRIGEKIPVSVWIKRLQQDRGLCCVVVLEPVERVSAWVAFQSDGTITSCDSLFAHLHGFTSPKDVVGQCVIDLIPSMQLPPPGQHIPKSLKIQRSVGRARDGTTFPLSLKLKSKPSGRAVADSEAASEPGYQASVWVFCTISGLITLLPDGTIYGVNHSFALMLFGYGKTELLGKNITFLIPGFYHYMDLTYDSSVQLPDLVNCLDIGRKSGPGEMNSDAQHNWELASGAQGPRIDVVLARDHMPSQDETLKLVGGQVSSRTQTRLETGYKILPSSACQPSLGVDSNPEDGEQSLLTDQQSIPKRNLPAHGGQNQLDTSEISLPVLKEHLLSEIQKNISEESPLTHRKWLSKVQQNPTKGSLPIHEEQLLFAGQHIHVLGKEDPSAAESYRESLLEESKSKPVDAKLFASCEDSEPLVSVKDRGSSVDTCNLHQEAQLELMGVSSPNPWADATMPEPHTTGQIAGGSLTYCPQYRSEWASQQRGQDSAPSPSGMACVLLGTPTLDEPWPGVRNDREELQTCLIKEQLSKSSCEGNLGISRVELVPEEHPPFTAPVSFCDLGGRDLHASRSGSSSACYALATDLPGVLEAVEAQEADVNSYSWNLKELFLKDQTDRTPSHCSCTTSELSEAPSLSVVGSDLDVGILHRQTSDILVDREMLLLTGTYFDLSEGQRFQEMGAGHDRAELSNISLVSSEHYETSDIESPGCDPPLPDPGPNDMCLSAEKPRPSAQITSTPVARGATSLQQEIQEGIYSGSCYHRDGLQLSIQFEVKRVELQGSATLFCCWLVKDLFHSHRDSATRTRLFLASLPSSTHSMPELSGSSFGEVLRAKPWFEESPTPAELEGLAACEGEYDYKYNTISPLGSGAFGFVWTAVEKECNKEVVVKFIKKEKVLEDCWIEDPKLGRVTLEIAILSKVDHANIIKVLDIFENQEFFQLVMEKHGSGMDLFAFIDHHPCLDEPLASFIFRQLVSAVGYLHSQGIIHRDIKDENIVIAEDFTIKLIDFGSAAYLERGKLFYTFCGTIEYCAPEVLIGNPYRGPELEMWSLGVTLYTLIFEENPFCEVEETMEAVIHPPFLVSQELMSLLSGLLQPCPEQRTTLEKLIRDPWVTQPVNLASYTWEEVCRTNQPESGLLSAASLEIGSRSPSEMAQREGLCGPPAPRETRGDQHCLHLKDPSLPVS</sequence>
<dbReference type="EC" id="2.7.11.1"/>
<dbReference type="EMBL" id="AJ318757">
    <property type="protein sequence ID" value="CAC45054.2"/>
    <property type="molecule type" value="Genomic_DNA"/>
</dbReference>
<dbReference type="EMBL" id="AK028435">
    <property type="protein sequence ID" value="BAC25951.1"/>
    <property type="molecule type" value="mRNA"/>
</dbReference>
<dbReference type="EMBL" id="AK129063">
    <property type="protein sequence ID" value="BAC97873.1"/>
    <property type="molecule type" value="mRNA"/>
</dbReference>
<dbReference type="EMBL" id="AC124669">
    <property type="status" value="NOT_ANNOTATED_CDS"/>
    <property type="molecule type" value="Genomic_DNA"/>
</dbReference>
<dbReference type="CCDS" id="CCDS15186.1"/>
<dbReference type="RefSeq" id="NP_001408031.1">
    <property type="nucleotide sequence ID" value="NM_001421102.1"/>
</dbReference>
<dbReference type="RefSeq" id="NP_001408032.1">
    <property type="nucleotide sequence ID" value="NM_001421103.1"/>
</dbReference>
<dbReference type="RefSeq" id="NP_543126.2">
    <property type="nucleotide sequence ID" value="NM_080850.3"/>
</dbReference>
<dbReference type="RefSeq" id="XP_006529728.1">
    <property type="nucleotide sequence ID" value="XM_006529665.3"/>
</dbReference>
<dbReference type="RefSeq" id="XP_006529729.1">
    <property type="nucleotide sequence ID" value="XM_006529666.2"/>
</dbReference>
<dbReference type="RefSeq" id="XP_006529730.1">
    <property type="nucleotide sequence ID" value="XM_006529667.2"/>
</dbReference>
<dbReference type="RefSeq" id="XP_017176526.1">
    <property type="nucleotide sequence ID" value="XM_017321037.1"/>
</dbReference>
<dbReference type="SMR" id="Q8CEE6"/>
<dbReference type="BioGRID" id="234624">
    <property type="interactions" value="7"/>
</dbReference>
<dbReference type="FunCoup" id="Q8CEE6">
    <property type="interactions" value="3978"/>
</dbReference>
<dbReference type="STRING" id="10090.ENSMUSP00000027493"/>
<dbReference type="GlyGen" id="Q8CEE6">
    <property type="glycosylation" value="1 site"/>
</dbReference>
<dbReference type="iPTMnet" id="Q8CEE6"/>
<dbReference type="PhosphoSitePlus" id="Q8CEE6"/>
<dbReference type="jPOST" id="Q8CEE6"/>
<dbReference type="PaxDb" id="10090-ENSMUSP00000027493"/>
<dbReference type="ProteomicsDB" id="288066"/>
<dbReference type="Pumba" id="Q8CEE6"/>
<dbReference type="Antibodypedia" id="20301">
    <property type="antibodies" value="213 antibodies from 29 providers"/>
</dbReference>
<dbReference type="DNASU" id="269224"/>
<dbReference type="Ensembl" id="ENSMUST00000027493.4">
    <property type="protein sequence ID" value="ENSMUSP00000027493.4"/>
    <property type="gene ID" value="ENSMUSG00000026274.12"/>
</dbReference>
<dbReference type="GeneID" id="269224"/>
<dbReference type="KEGG" id="mmu:269224"/>
<dbReference type="UCSC" id="uc007cdt.2">
    <property type="organism name" value="mouse"/>
</dbReference>
<dbReference type="AGR" id="MGI:2155936"/>
<dbReference type="CTD" id="23178"/>
<dbReference type="MGI" id="MGI:2155936">
    <property type="gene designation" value="Pask"/>
</dbReference>
<dbReference type="VEuPathDB" id="HostDB:ENSMUSG00000026274"/>
<dbReference type="eggNOG" id="KOG1152">
    <property type="taxonomic scope" value="Eukaryota"/>
</dbReference>
<dbReference type="GeneTree" id="ENSGT00940000159035"/>
<dbReference type="HOGENOM" id="CLU_006086_0_0_1"/>
<dbReference type="InParanoid" id="Q8CEE6"/>
<dbReference type="OMA" id="AFIDHHP"/>
<dbReference type="OrthoDB" id="10252171at2759"/>
<dbReference type="PhylomeDB" id="Q8CEE6"/>
<dbReference type="TreeFam" id="TF323242"/>
<dbReference type="BioGRID-ORCS" id="269224">
    <property type="hits" value="1 hit in 80 CRISPR screens"/>
</dbReference>
<dbReference type="ChiTaRS" id="Pask">
    <property type="organism name" value="mouse"/>
</dbReference>
<dbReference type="PRO" id="PR:Q8CEE6"/>
<dbReference type="Proteomes" id="UP000000589">
    <property type="component" value="Chromosome 1"/>
</dbReference>
<dbReference type="RNAct" id="Q8CEE6">
    <property type="molecule type" value="protein"/>
</dbReference>
<dbReference type="Bgee" id="ENSMUSG00000026274">
    <property type="expression patterns" value="Expressed in spermatocyte and 140 other cell types or tissues"/>
</dbReference>
<dbReference type="ExpressionAtlas" id="Q8CEE6">
    <property type="expression patterns" value="baseline and differential"/>
</dbReference>
<dbReference type="GO" id="GO:0005737">
    <property type="term" value="C:cytoplasm"/>
    <property type="evidence" value="ECO:0000250"/>
    <property type="project" value="UniProtKB"/>
</dbReference>
<dbReference type="GO" id="GO:0005829">
    <property type="term" value="C:cytosol"/>
    <property type="evidence" value="ECO:0007669"/>
    <property type="project" value="Ensembl"/>
</dbReference>
<dbReference type="GO" id="GO:0005634">
    <property type="term" value="C:nucleus"/>
    <property type="evidence" value="ECO:0000250"/>
    <property type="project" value="UniProtKB"/>
</dbReference>
<dbReference type="GO" id="GO:0005524">
    <property type="term" value="F:ATP binding"/>
    <property type="evidence" value="ECO:0007669"/>
    <property type="project" value="UniProtKB-KW"/>
</dbReference>
<dbReference type="GO" id="GO:0035091">
    <property type="term" value="F:phosphatidylinositol binding"/>
    <property type="evidence" value="ECO:0000250"/>
    <property type="project" value="UniProtKB"/>
</dbReference>
<dbReference type="GO" id="GO:0106310">
    <property type="term" value="F:protein serine kinase activity"/>
    <property type="evidence" value="ECO:0007669"/>
    <property type="project" value="RHEA"/>
</dbReference>
<dbReference type="GO" id="GO:0004674">
    <property type="term" value="F:protein serine/threonine kinase activity"/>
    <property type="evidence" value="ECO:0000250"/>
    <property type="project" value="UniProtKB"/>
</dbReference>
<dbReference type="GO" id="GO:0097009">
    <property type="term" value="P:energy homeostasis"/>
    <property type="evidence" value="ECO:0000315"/>
    <property type="project" value="UniProtKB"/>
</dbReference>
<dbReference type="GO" id="GO:0045719">
    <property type="term" value="P:negative regulation of glycogen biosynthetic process"/>
    <property type="evidence" value="ECO:0000250"/>
    <property type="project" value="UniProtKB"/>
</dbReference>
<dbReference type="GO" id="GO:0046777">
    <property type="term" value="P:protein autophosphorylation"/>
    <property type="evidence" value="ECO:0000250"/>
    <property type="project" value="UniProtKB"/>
</dbReference>
<dbReference type="GO" id="GO:0006468">
    <property type="term" value="P:protein phosphorylation"/>
    <property type="evidence" value="ECO:0000250"/>
    <property type="project" value="UniProtKB"/>
</dbReference>
<dbReference type="GO" id="GO:0006355">
    <property type="term" value="P:regulation of DNA-templated transcription"/>
    <property type="evidence" value="ECO:0007669"/>
    <property type="project" value="InterPro"/>
</dbReference>
<dbReference type="GO" id="GO:0070092">
    <property type="term" value="P:regulation of glucagon secretion"/>
    <property type="evidence" value="ECO:0000315"/>
    <property type="project" value="UniProtKB"/>
</dbReference>
<dbReference type="GO" id="GO:0043576">
    <property type="term" value="P:regulation of respiratory gaseous exchange"/>
    <property type="evidence" value="ECO:0000315"/>
    <property type="project" value="UniProtKB"/>
</dbReference>
<dbReference type="CDD" id="cd00130">
    <property type="entry name" value="PAS"/>
    <property type="match status" value="2"/>
</dbReference>
<dbReference type="CDD" id="cd14004">
    <property type="entry name" value="STKc_PASK"/>
    <property type="match status" value="1"/>
</dbReference>
<dbReference type="FunFam" id="3.30.450.20:FF:000059">
    <property type="entry name" value="PAS domain containing serine/threonine kinase"/>
    <property type="match status" value="1"/>
</dbReference>
<dbReference type="FunFam" id="1.10.510.10:FF:000351">
    <property type="entry name" value="PAS domain-containing serine/threonine-protein kinase"/>
    <property type="match status" value="1"/>
</dbReference>
<dbReference type="FunFam" id="3.30.200.20:FF:000346">
    <property type="entry name" value="PAS domain-containing serine/threonine-protein kinase"/>
    <property type="match status" value="1"/>
</dbReference>
<dbReference type="Gene3D" id="3.30.450.20">
    <property type="entry name" value="PAS domain"/>
    <property type="match status" value="1"/>
</dbReference>
<dbReference type="Gene3D" id="3.30.200.20">
    <property type="entry name" value="Phosphorylase Kinase, domain 1"/>
    <property type="match status" value="1"/>
</dbReference>
<dbReference type="Gene3D" id="1.10.510.10">
    <property type="entry name" value="Transferase(Phosphotransferase) domain 1"/>
    <property type="match status" value="1"/>
</dbReference>
<dbReference type="InterPro" id="IPR011009">
    <property type="entry name" value="Kinase-like_dom_sf"/>
</dbReference>
<dbReference type="InterPro" id="IPR000014">
    <property type="entry name" value="PAS"/>
</dbReference>
<dbReference type="InterPro" id="IPR035965">
    <property type="entry name" value="PAS-like_dom_sf"/>
</dbReference>
<dbReference type="InterPro" id="IPR013767">
    <property type="entry name" value="PAS_fold"/>
</dbReference>
<dbReference type="InterPro" id="IPR000719">
    <property type="entry name" value="Prot_kinase_dom"/>
</dbReference>
<dbReference type="InterPro" id="IPR017441">
    <property type="entry name" value="Protein_kinase_ATP_BS"/>
</dbReference>
<dbReference type="InterPro" id="IPR008271">
    <property type="entry name" value="Ser/Thr_kinase_AS"/>
</dbReference>
<dbReference type="NCBIfam" id="TIGR00229">
    <property type="entry name" value="sensory_box"/>
    <property type="match status" value="1"/>
</dbReference>
<dbReference type="PANTHER" id="PTHR24346">
    <property type="entry name" value="MAP/MICROTUBULE AFFINITY-REGULATING KINASE"/>
    <property type="match status" value="1"/>
</dbReference>
<dbReference type="PANTHER" id="PTHR24346:SF96">
    <property type="entry name" value="PAS DOMAIN-CONTAINING SERINE_THREONINE-PROTEIN KINASE"/>
    <property type="match status" value="1"/>
</dbReference>
<dbReference type="Pfam" id="PF00989">
    <property type="entry name" value="PAS"/>
    <property type="match status" value="1"/>
</dbReference>
<dbReference type="Pfam" id="PF13426">
    <property type="entry name" value="PAS_9"/>
    <property type="match status" value="1"/>
</dbReference>
<dbReference type="Pfam" id="PF00069">
    <property type="entry name" value="Pkinase"/>
    <property type="match status" value="1"/>
</dbReference>
<dbReference type="SMART" id="SM00091">
    <property type="entry name" value="PAS"/>
    <property type="match status" value="2"/>
</dbReference>
<dbReference type="SMART" id="SM00220">
    <property type="entry name" value="S_TKc"/>
    <property type="match status" value="1"/>
</dbReference>
<dbReference type="SUPFAM" id="SSF56112">
    <property type="entry name" value="Protein kinase-like (PK-like)"/>
    <property type="match status" value="1"/>
</dbReference>
<dbReference type="SUPFAM" id="SSF55785">
    <property type="entry name" value="PYP-like sensor domain (PAS domain)"/>
    <property type="match status" value="1"/>
</dbReference>
<dbReference type="PROSITE" id="PS50112">
    <property type="entry name" value="PAS"/>
    <property type="match status" value="1"/>
</dbReference>
<dbReference type="PROSITE" id="PS00107">
    <property type="entry name" value="PROTEIN_KINASE_ATP"/>
    <property type="match status" value="1"/>
</dbReference>
<dbReference type="PROSITE" id="PS50011">
    <property type="entry name" value="PROTEIN_KINASE_DOM"/>
    <property type="match status" value="1"/>
</dbReference>
<dbReference type="PROSITE" id="PS00108">
    <property type="entry name" value="PROTEIN_KINASE_ST"/>
    <property type="match status" value="1"/>
</dbReference>
<accession>Q8CEE6</accession>
<accession>E9QM58</accession>
<accession>Q91YD8</accession>
<gene>
    <name type="primary">Pask</name>
    <name type="synonym">Kiaa0135</name>
</gene>
<protein>
    <recommendedName>
        <fullName>PAS domain-containing serine/threonine-protein kinase</fullName>
        <shortName>PAS-kinase</shortName>
        <shortName>PASKIN</shortName>
        <ecNumber>2.7.11.1</ecNumber>
    </recommendedName>
</protein>